<keyword id="KW-1015">Disulfide bond</keyword>
<keyword id="KW-0646">Protease inhibitor</keyword>
<keyword id="KW-1185">Reference proteome</keyword>
<keyword id="KW-0789">Thiol protease inhibitor</keyword>
<keyword id="KW-0926">Vacuole</keyword>
<comment type="function">
    <text>Inhibitor of cysteine proteases. May protect the plant by inhibiting proteases of invading organisms.</text>
</comment>
<comment type="subcellular location">
    <subcellularLocation>
        <location evidence="1">Vacuole</location>
    </subcellularLocation>
</comment>
<comment type="similarity">
    <text evidence="2">Belongs to the protease inhibitor I3 (leguminous Kunitz-type inhibitor) family.</text>
</comment>
<protein>
    <recommendedName>
        <fullName>Cysteine protease inhibitor 7</fullName>
    </recommendedName>
    <alternativeName>
        <fullName>PCPI-7</fullName>
        <shortName>Pcpi7</shortName>
    </alternativeName>
</protein>
<organism>
    <name type="scientific">Solanum tuberosum</name>
    <name type="common">Potato</name>
    <dbReference type="NCBI Taxonomy" id="4113"/>
    <lineage>
        <taxon>Eukaryota</taxon>
        <taxon>Viridiplantae</taxon>
        <taxon>Streptophyta</taxon>
        <taxon>Embryophyta</taxon>
        <taxon>Tracheophyta</taxon>
        <taxon>Spermatophyta</taxon>
        <taxon>Magnoliopsida</taxon>
        <taxon>eudicotyledons</taxon>
        <taxon>Gunneridae</taxon>
        <taxon>Pentapetalae</taxon>
        <taxon>asterids</taxon>
        <taxon>lamiids</taxon>
        <taxon>Solanales</taxon>
        <taxon>Solanaceae</taxon>
        <taxon>Solanoideae</taxon>
        <taxon>Solaneae</taxon>
        <taxon>Solanum</taxon>
    </lineage>
</organism>
<sequence>VLPEVYDQDGEPLRIGERYIIKNPLLGGGAVYLYNIGNLQCPNAVLQHMSIPQFLGKGTPVVFVRKSESDYGDVVRVMTGVYIKFFFKTSKLCVDETVWKVNDEELVVTGGNVGNENDIFKIKKTDLVIRGMKNVYKLLHCRSHLGCKNIGGNFKNGYPRLAAVDDDKDFIPFVFIKA</sequence>
<reference key="1">
    <citation type="journal article" date="1997" name="Plant Mol. Biol.">
        <title>Potato cysteine proteinase inhibitor gene family: molecular cloning, characterisation and immunocytochemical localisation studies.</title>
        <authorList>
            <person name="Gruden K."/>
            <person name="Strukelj B."/>
            <person name="Ravnikar M."/>
            <person name="Poljsak-Prijatelj M."/>
            <person name="Mavric I."/>
            <person name="Brzin J."/>
            <person name="Pungercar J."/>
            <person name="Kregar I."/>
        </authorList>
    </citation>
    <scope>NUCLEOTIDE SEQUENCE [MRNA]</scope>
    <source>
        <strain>cv. Ulster Sceptre</strain>
        <tissue>Tuber</tissue>
    </source>
</reference>
<evidence type="ECO:0000250" key="1"/>
<evidence type="ECO:0000305" key="2"/>
<feature type="chain" id="PRO_0000083319" description="Cysteine protease inhibitor 7">
    <location>
        <begin position="1" status="less than"/>
        <end position="178"/>
    </location>
</feature>
<feature type="disulfide bond" evidence="1">
    <location>
        <begin position="41"/>
        <end position="93"/>
    </location>
</feature>
<feature type="disulfide bond" evidence="1">
    <location>
        <begin position="141"/>
        <end position="147"/>
    </location>
</feature>
<feature type="non-terminal residue">
    <location>
        <position position="1"/>
    </location>
</feature>
<dbReference type="EMBL" id="U59274">
    <property type="protein sequence ID" value="AAB63100.1"/>
    <property type="molecule type" value="mRNA"/>
</dbReference>
<dbReference type="PIR" id="T07752">
    <property type="entry name" value="T07752"/>
</dbReference>
<dbReference type="SMR" id="O24385"/>
<dbReference type="MEROPS" id="I03.017"/>
<dbReference type="InParanoid" id="O24385"/>
<dbReference type="Proteomes" id="UP000011115">
    <property type="component" value="Unassembled WGS sequence"/>
</dbReference>
<dbReference type="ExpressionAtlas" id="O24385">
    <property type="expression patterns" value="baseline and differential"/>
</dbReference>
<dbReference type="GO" id="GO:0005773">
    <property type="term" value="C:vacuole"/>
    <property type="evidence" value="ECO:0007669"/>
    <property type="project" value="UniProtKB-SubCell"/>
</dbReference>
<dbReference type="GO" id="GO:0004869">
    <property type="term" value="F:cysteine-type endopeptidase inhibitor activity"/>
    <property type="evidence" value="ECO:0007669"/>
    <property type="project" value="UniProtKB-KW"/>
</dbReference>
<dbReference type="CDD" id="cd23372">
    <property type="entry name" value="beta-trefoil_STI_CPI-like"/>
    <property type="match status" value="1"/>
</dbReference>
<dbReference type="Gene3D" id="2.80.10.50">
    <property type="match status" value="1"/>
</dbReference>
<dbReference type="InterPro" id="IPR011065">
    <property type="entry name" value="Kunitz_inhibitor_STI-like_sf"/>
</dbReference>
<dbReference type="InterPro" id="IPR002160">
    <property type="entry name" value="Prot_inh_Kunz-lg"/>
</dbReference>
<dbReference type="PANTHER" id="PTHR33107:SF44">
    <property type="entry name" value="CYSTEINE PROTEASE INHIBITOR 1"/>
    <property type="match status" value="1"/>
</dbReference>
<dbReference type="PANTHER" id="PTHR33107">
    <property type="entry name" value="KUNITZ TRYPSIN INHIBITOR 2"/>
    <property type="match status" value="1"/>
</dbReference>
<dbReference type="Pfam" id="PF00197">
    <property type="entry name" value="Kunitz_legume"/>
    <property type="match status" value="1"/>
</dbReference>
<dbReference type="SMART" id="SM00452">
    <property type="entry name" value="STI"/>
    <property type="match status" value="1"/>
</dbReference>
<dbReference type="SUPFAM" id="SSF50386">
    <property type="entry name" value="STI-like"/>
    <property type="match status" value="1"/>
</dbReference>
<dbReference type="PROSITE" id="PS00283">
    <property type="entry name" value="SOYBEAN_KUNITZ"/>
    <property type="match status" value="1"/>
</dbReference>
<proteinExistence type="evidence at transcript level"/>
<accession>O24385</accession>
<name>CPI7_SOLTU</name>